<dbReference type="EC" id="2.4.2.1" evidence="1"/>
<dbReference type="EC" id="2.4.2.2" evidence="1"/>
<dbReference type="EMBL" id="AM406670">
    <property type="protein sequence ID" value="CAL94801.1"/>
    <property type="molecule type" value="Genomic_DNA"/>
</dbReference>
<dbReference type="RefSeq" id="WP_011765915.1">
    <property type="nucleotide sequence ID" value="NC_008702.1"/>
</dbReference>
<dbReference type="SMR" id="A1K7J6"/>
<dbReference type="STRING" id="62928.azo2184"/>
<dbReference type="KEGG" id="azo:azo2184"/>
<dbReference type="eggNOG" id="COG3123">
    <property type="taxonomic scope" value="Bacteria"/>
</dbReference>
<dbReference type="HOGENOM" id="CLU_157874_1_0_4"/>
<dbReference type="Proteomes" id="UP000002588">
    <property type="component" value="Chromosome"/>
</dbReference>
<dbReference type="GO" id="GO:0005829">
    <property type="term" value="C:cytosol"/>
    <property type="evidence" value="ECO:0007669"/>
    <property type="project" value="TreeGrafter"/>
</dbReference>
<dbReference type="GO" id="GO:0047975">
    <property type="term" value="F:guanosine phosphorylase activity"/>
    <property type="evidence" value="ECO:0007669"/>
    <property type="project" value="UniProtKB-EC"/>
</dbReference>
<dbReference type="GO" id="GO:0004731">
    <property type="term" value="F:purine-nucleoside phosphorylase activity"/>
    <property type="evidence" value="ECO:0007669"/>
    <property type="project" value="UniProtKB-UniRule"/>
</dbReference>
<dbReference type="GO" id="GO:0009032">
    <property type="term" value="F:thymidine phosphorylase activity"/>
    <property type="evidence" value="ECO:0007669"/>
    <property type="project" value="UniProtKB-EC"/>
</dbReference>
<dbReference type="GO" id="GO:0004850">
    <property type="term" value="F:uridine phosphorylase activity"/>
    <property type="evidence" value="ECO:0007669"/>
    <property type="project" value="UniProtKB-EC"/>
</dbReference>
<dbReference type="CDD" id="cd20296">
    <property type="entry name" value="cupin_PpnP-like"/>
    <property type="match status" value="1"/>
</dbReference>
<dbReference type="Gene3D" id="2.60.120.10">
    <property type="entry name" value="Jelly Rolls"/>
    <property type="match status" value="1"/>
</dbReference>
<dbReference type="HAMAP" id="MF_01537">
    <property type="entry name" value="Nucleos_phosphorylase_PpnP"/>
    <property type="match status" value="1"/>
</dbReference>
<dbReference type="InterPro" id="IPR009664">
    <property type="entry name" value="Ppnp"/>
</dbReference>
<dbReference type="InterPro" id="IPR014710">
    <property type="entry name" value="RmlC-like_jellyroll"/>
</dbReference>
<dbReference type="InterPro" id="IPR011051">
    <property type="entry name" value="RmlC_Cupin_sf"/>
</dbReference>
<dbReference type="PANTHER" id="PTHR36540">
    <property type="entry name" value="PYRIMIDINE/PURINE NUCLEOSIDE PHOSPHORYLASE"/>
    <property type="match status" value="1"/>
</dbReference>
<dbReference type="PANTHER" id="PTHR36540:SF1">
    <property type="entry name" value="PYRIMIDINE_PURINE NUCLEOSIDE PHOSPHORYLASE"/>
    <property type="match status" value="1"/>
</dbReference>
<dbReference type="Pfam" id="PF06865">
    <property type="entry name" value="Ppnp"/>
    <property type="match status" value="1"/>
</dbReference>
<dbReference type="SUPFAM" id="SSF51182">
    <property type="entry name" value="RmlC-like cupins"/>
    <property type="match status" value="1"/>
</dbReference>
<comment type="function">
    <text evidence="1">Catalyzes the phosphorolysis of diverse nucleosides, yielding D-ribose 1-phosphate and the respective free bases. Can use uridine, adenosine, guanosine, cytidine, thymidine, inosine and xanthosine as substrates. Also catalyzes the reverse reactions.</text>
</comment>
<comment type="catalytic activity">
    <reaction evidence="1">
        <text>a purine D-ribonucleoside + phosphate = a purine nucleobase + alpha-D-ribose 1-phosphate</text>
        <dbReference type="Rhea" id="RHEA:19805"/>
        <dbReference type="ChEBI" id="CHEBI:26386"/>
        <dbReference type="ChEBI" id="CHEBI:43474"/>
        <dbReference type="ChEBI" id="CHEBI:57720"/>
        <dbReference type="ChEBI" id="CHEBI:142355"/>
        <dbReference type="EC" id="2.4.2.1"/>
    </reaction>
</comment>
<comment type="catalytic activity">
    <reaction evidence="1">
        <text>adenosine + phosphate = alpha-D-ribose 1-phosphate + adenine</text>
        <dbReference type="Rhea" id="RHEA:27642"/>
        <dbReference type="ChEBI" id="CHEBI:16335"/>
        <dbReference type="ChEBI" id="CHEBI:16708"/>
        <dbReference type="ChEBI" id="CHEBI:43474"/>
        <dbReference type="ChEBI" id="CHEBI:57720"/>
        <dbReference type="EC" id="2.4.2.1"/>
    </reaction>
</comment>
<comment type="catalytic activity">
    <reaction evidence="1">
        <text>cytidine + phosphate = cytosine + alpha-D-ribose 1-phosphate</text>
        <dbReference type="Rhea" id="RHEA:52540"/>
        <dbReference type="ChEBI" id="CHEBI:16040"/>
        <dbReference type="ChEBI" id="CHEBI:17562"/>
        <dbReference type="ChEBI" id="CHEBI:43474"/>
        <dbReference type="ChEBI" id="CHEBI:57720"/>
        <dbReference type="EC" id="2.4.2.2"/>
    </reaction>
</comment>
<comment type="catalytic activity">
    <reaction evidence="1">
        <text>guanosine + phosphate = alpha-D-ribose 1-phosphate + guanine</text>
        <dbReference type="Rhea" id="RHEA:13233"/>
        <dbReference type="ChEBI" id="CHEBI:16235"/>
        <dbReference type="ChEBI" id="CHEBI:16750"/>
        <dbReference type="ChEBI" id="CHEBI:43474"/>
        <dbReference type="ChEBI" id="CHEBI:57720"/>
        <dbReference type="EC" id="2.4.2.1"/>
    </reaction>
</comment>
<comment type="catalytic activity">
    <reaction evidence="1">
        <text>inosine + phosphate = alpha-D-ribose 1-phosphate + hypoxanthine</text>
        <dbReference type="Rhea" id="RHEA:27646"/>
        <dbReference type="ChEBI" id="CHEBI:17368"/>
        <dbReference type="ChEBI" id="CHEBI:17596"/>
        <dbReference type="ChEBI" id="CHEBI:43474"/>
        <dbReference type="ChEBI" id="CHEBI:57720"/>
        <dbReference type="EC" id="2.4.2.1"/>
    </reaction>
</comment>
<comment type="catalytic activity">
    <reaction evidence="1">
        <text>thymidine + phosphate = 2-deoxy-alpha-D-ribose 1-phosphate + thymine</text>
        <dbReference type="Rhea" id="RHEA:16037"/>
        <dbReference type="ChEBI" id="CHEBI:17748"/>
        <dbReference type="ChEBI" id="CHEBI:17821"/>
        <dbReference type="ChEBI" id="CHEBI:43474"/>
        <dbReference type="ChEBI" id="CHEBI:57259"/>
        <dbReference type="EC" id="2.4.2.2"/>
    </reaction>
</comment>
<comment type="catalytic activity">
    <reaction evidence="1">
        <text>uridine + phosphate = alpha-D-ribose 1-phosphate + uracil</text>
        <dbReference type="Rhea" id="RHEA:24388"/>
        <dbReference type="ChEBI" id="CHEBI:16704"/>
        <dbReference type="ChEBI" id="CHEBI:17568"/>
        <dbReference type="ChEBI" id="CHEBI:43474"/>
        <dbReference type="ChEBI" id="CHEBI:57720"/>
        <dbReference type="EC" id="2.4.2.2"/>
    </reaction>
</comment>
<comment type="catalytic activity">
    <reaction evidence="1">
        <text>xanthosine + phosphate = alpha-D-ribose 1-phosphate + xanthine</text>
        <dbReference type="Rhea" id="RHEA:27638"/>
        <dbReference type="ChEBI" id="CHEBI:17712"/>
        <dbReference type="ChEBI" id="CHEBI:18107"/>
        <dbReference type="ChEBI" id="CHEBI:43474"/>
        <dbReference type="ChEBI" id="CHEBI:57720"/>
        <dbReference type="EC" id="2.4.2.1"/>
    </reaction>
</comment>
<comment type="similarity">
    <text evidence="1">Belongs to the nucleoside phosphorylase PpnP family.</text>
</comment>
<keyword id="KW-0328">Glycosyltransferase</keyword>
<keyword id="KW-1185">Reference proteome</keyword>
<keyword id="KW-0808">Transferase</keyword>
<feature type="chain" id="PRO_0000298689" description="Pyrimidine/purine nucleoside phosphorylase">
    <location>
        <begin position="1"/>
        <end position="107"/>
    </location>
</feature>
<evidence type="ECO:0000255" key="1">
    <source>
        <dbReference type="HAMAP-Rule" id="MF_01537"/>
    </source>
</evidence>
<reference key="1">
    <citation type="journal article" date="2006" name="Nat. Biotechnol.">
        <title>Complete genome of the mutualistic, N2-fixing grass endophyte Azoarcus sp. strain BH72.</title>
        <authorList>
            <person name="Krause A."/>
            <person name="Ramakumar A."/>
            <person name="Bartels D."/>
            <person name="Battistoni F."/>
            <person name="Bekel T."/>
            <person name="Boch J."/>
            <person name="Boehm M."/>
            <person name="Friedrich F."/>
            <person name="Hurek T."/>
            <person name="Krause L."/>
            <person name="Linke B."/>
            <person name="McHardy A.C."/>
            <person name="Sarkar A."/>
            <person name="Schneiker S."/>
            <person name="Syed A.A."/>
            <person name="Thauer R."/>
            <person name="Vorhoelter F.-J."/>
            <person name="Weidner S."/>
            <person name="Puehler A."/>
            <person name="Reinhold-Hurek B."/>
            <person name="Kaiser O."/>
            <person name="Goesmann A."/>
        </authorList>
    </citation>
    <scope>NUCLEOTIDE SEQUENCE [LARGE SCALE GENOMIC DNA]</scope>
    <source>
        <strain>BH72</strain>
    </source>
</reference>
<organism>
    <name type="scientific">Azoarcus sp. (strain BH72)</name>
    <dbReference type="NCBI Taxonomy" id="418699"/>
    <lineage>
        <taxon>Bacteria</taxon>
        <taxon>Pseudomonadati</taxon>
        <taxon>Pseudomonadota</taxon>
        <taxon>Betaproteobacteria</taxon>
        <taxon>Rhodocyclales</taxon>
        <taxon>Zoogloeaceae</taxon>
        <taxon>Azoarcus</taxon>
    </lineage>
</organism>
<name>PPNP_AZOSB</name>
<gene>
    <name evidence="1" type="primary">ppnP</name>
    <name type="ordered locus">azo2184</name>
</gene>
<protein>
    <recommendedName>
        <fullName evidence="1">Pyrimidine/purine nucleoside phosphorylase</fullName>
        <ecNumber evidence="1">2.4.2.1</ecNumber>
        <ecNumber evidence="1">2.4.2.2</ecNumber>
    </recommendedName>
    <alternativeName>
        <fullName evidence="1">Adenosine phosphorylase</fullName>
    </alternativeName>
    <alternativeName>
        <fullName evidence="1">Cytidine phosphorylase</fullName>
    </alternativeName>
    <alternativeName>
        <fullName evidence="1">Guanosine phosphorylase</fullName>
    </alternativeName>
    <alternativeName>
        <fullName evidence="1">Inosine phosphorylase</fullName>
    </alternativeName>
    <alternativeName>
        <fullName evidence="1">Thymidine phosphorylase</fullName>
    </alternativeName>
    <alternativeName>
        <fullName evidence="1">Uridine phosphorylase</fullName>
    </alternativeName>
    <alternativeName>
        <fullName evidence="1">Xanthosine phosphorylase</fullName>
    </alternativeName>
</protein>
<sequence>MGITEKLDGVAVTTKANVYFDGKCVSHSVRFADGTGKSVGVILPSILTFNTGAPEVMEGVAGSCRVRLKGETTWNTYGAGESYQVPGNSSFDIEVVGEPYHYICHFG</sequence>
<accession>A1K7J6</accession>
<proteinExistence type="inferred from homology"/>